<organism>
    <name type="scientific">Streptococcus thermophilus (strain CNRZ 1066)</name>
    <dbReference type="NCBI Taxonomy" id="299768"/>
    <lineage>
        <taxon>Bacteria</taxon>
        <taxon>Bacillati</taxon>
        <taxon>Bacillota</taxon>
        <taxon>Bacilli</taxon>
        <taxon>Lactobacillales</taxon>
        <taxon>Streptococcaceae</taxon>
        <taxon>Streptococcus</taxon>
    </lineage>
</organism>
<accession>Q5M027</accession>
<gene>
    <name type="ordered locus">str0888</name>
</gene>
<name>Y888_STRT1</name>
<reference key="1">
    <citation type="journal article" date="2004" name="Nat. Biotechnol.">
        <title>Complete sequence and comparative genome analysis of the dairy bacterium Streptococcus thermophilus.</title>
        <authorList>
            <person name="Bolotin A."/>
            <person name="Quinquis B."/>
            <person name="Renault P."/>
            <person name="Sorokin A."/>
            <person name="Ehrlich S.D."/>
            <person name="Kulakauskas S."/>
            <person name="Lapidus A."/>
            <person name="Goltsman E."/>
            <person name="Mazur M."/>
            <person name="Pusch G.D."/>
            <person name="Fonstein M."/>
            <person name="Overbeek R."/>
            <person name="Kyprides N."/>
            <person name="Purnelle B."/>
            <person name="Prozzi D."/>
            <person name="Ngui K."/>
            <person name="Masuy D."/>
            <person name="Hancy F."/>
            <person name="Burteau S."/>
            <person name="Boutry M."/>
            <person name="Delcour J."/>
            <person name="Goffeau A."/>
            <person name="Hols P."/>
        </authorList>
    </citation>
    <scope>NUCLEOTIDE SEQUENCE [LARGE SCALE GENOMIC DNA]</scope>
    <source>
        <strain>CNRZ 1066</strain>
    </source>
</reference>
<protein>
    <recommendedName>
        <fullName evidence="1">UPF0122 protein str0888</fullName>
    </recommendedName>
</protein>
<feature type="chain" id="PRO_1000012552" description="UPF0122 protein str0888">
    <location>
        <begin position="1"/>
        <end position="110"/>
    </location>
</feature>
<proteinExistence type="inferred from homology"/>
<evidence type="ECO:0000255" key="1">
    <source>
        <dbReference type="HAMAP-Rule" id="MF_00245"/>
    </source>
</evidence>
<dbReference type="EMBL" id="CP000024">
    <property type="protein sequence ID" value="AAV62476.1"/>
    <property type="molecule type" value="Genomic_DNA"/>
</dbReference>
<dbReference type="RefSeq" id="WP_002950594.1">
    <property type="nucleotide sequence ID" value="NC_006449.1"/>
</dbReference>
<dbReference type="SMR" id="Q5M027"/>
<dbReference type="KEGG" id="stc:str0888"/>
<dbReference type="HOGENOM" id="CLU_129218_1_0_9"/>
<dbReference type="Gene3D" id="1.10.10.10">
    <property type="entry name" value="Winged helix-like DNA-binding domain superfamily/Winged helix DNA-binding domain"/>
    <property type="match status" value="1"/>
</dbReference>
<dbReference type="HAMAP" id="MF_00245">
    <property type="entry name" value="UPF0122"/>
    <property type="match status" value="1"/>
</dbReference>
<dbReference type="InterPro" id="IPR013324">
    <property type="entry name" value="RNA_pol_sigma_r3/r4-like"/>
</dbReference>
<dbReference type="InterPro" id="IPR007394">
    <property type="entry name" value="UPF0122"/>
</dbReference>
<dbReference type="InterPro" id="IPR054831">
    <property type="entry name" value="UPF0122_fam_protein"/>
</dbReference>
<dbReference type="InterPro" id="IPR036388">
    <property type="entry name" value="WH-like_DNA-bd_sf"/>
</dbReference>
<dbReference type="NCBIfam" id="NF001066">
    <property type="entry name" value="PRK00118.1-1"/>
    <property type="match status" value="1"/>
</dbReference>
<dbReference type="NCBIfam" id="NF001068">
    <property type="entry name" value="PRK00118.1-4"/>
    <property type="match status" value="1"/>
</dbReference>
<dbReference type="NCBIfam" id="NF001070">
    <property type="entry name" value="PRK00118.1-6"/>
    <property type="match status" value="1"/>
</dbReference>
<dbReference type="NCBIfam" id="NF045758">
    <property type="entry name" value="YlxM"/>
    <property type="match status" value="1"/>
</dbReference>
<dbReference type="PANTHER" id="PTHR40083">
    <property type="entry name" value="UPF0122 PROTEIN CBO2450/CLC_2298"/>
    <property type="match status" value="1"/>
</dbReference>
<dbReference type="PANTHER" id="PTHR40083:SF1">
    <property type="entry name" value="UPF0122 PROTEIN YLXM"/>
    <property type="match status" value="1"/>
</dbReference>
<dbReference type="Pfam" id="PF04297">
    <property type="entry name" value="UPF0122"/>
    <property type="match status" value="1"/>
</dbReference>
<dbReference type="SUPFAM" id="SSF88659">
    <property type="entry name" value="Sigma3 and sigma4 domains of RNA polymerase sigma factors"/>
    <property type="match status" value="1"/>
</dbReference>
<comment type="function">
    <text evidence="1">Might take part in the signal recognition particle (SRP) pathway. This is inferred from the conservation of its genetic proximity to ftsY/ffh. May be a regulatory protein.</text>
</comment>
<comment type="similarity">
    <text evidence="1">Belongs to the UPF0122 family.</text>
</comment>
<sequence length="110" mass="13188">MEIEKTNRMNALFEFYAALLTDKQMNYIELYYADDYSLAEIAEEFGVSRQAVYDNIKRTEKILEDYEMKLHMYSDYIVRSQIFDDIMEKYADDSYLQEQIAILSSIDNRD</sequence>